<sequence length="432" mass="50160">MLFMVKFRWETEFKETDIGKIPKDWDVKKIKDIGEVAGGSTPSTKIKEYWGGDIPWITPKDLANYEYIYISRGERNITEKAVKECSLRIFPKGTILLTSRAPIGYVAIAKNPLTTNQGFRNIIPKDGVVSEYLYYLFKTKTMSEYLKDISGGSTFPELKGSTLKEVEIPYPSPEEQQKIATVLSYFDDLIENKKKQNEILEKIALELFKNWFIDFEPFKNEEFVYNDELDKEIPKGWEVKRLGDILKVESGSNAPQREIYFENAKIPFVRVKHLVKGVCIESSDFINELALKDYKMKLYNEKSIIFQKSGESLKEARVNIVPFKFTAVNHLAVIDSSMLNEKHYFIYCLLRFLLKEIVYSVKGTTLPYLKISDIENKYIIIPPQPILQKFHSLVQPLFEKIINNQKQIMVLKKIRDALLPKLVFGELRVEEL</sequence>
<protein>
    <recommendedName>
        <fullName evidence="3">Type I restriction enzyme MjaIX specificity subunit</fullName>
        <shortName>S protein</shortName>
    </recommendedName>
    <alternativeName>
        <fullName evidence="2">Type I specificity subunit S.MjaIX</fullName>
        <shortName evidence="2">S.MjaIX</shortName>
    </alternativeName>
    <alternativeName>
        <fullName>Type-1 restriction enzyme MjaXP specificity subunit</fullName>
        <shortName>S.MjaXP</shortName>
    </alternativeName>
</protein>
<geneLocation type="plasmid">
    <name>large ECE</name>
</geneLocation>
<keyword id="KW-0238">DNA-binding</keyword>
<keyword id="KW-0614">Plasmid</keyword>
<keyword id="KW-1185">Reference proteome</keyword>
<keyword id="KW-0680">Restriction system</keyword>
<name>T1SH_METJA</name>
<reference key="1">
    <citation type="journal article" date="1996" name="Science">
        <title>Complete genome sequence of the methanogenic archaeon, Methanococcus jannaschii.</title>
        <authorList>
            <person name="Bult C.J."/>
            <person name="White O."/>
            <person name="Olsen G.J."/>
            <person name="Zhou L."/>
            <person name="Fleischmann R.D."/>
            <person name="Sutton G.G."/>
            <person name="Blake J.A."/>
            <person name="FitzGerald L.M."/>
            <person name="Clayton R.A."/>
            <person name="Gocayne J.D."/>
            <person name="Kerlavage A.R."/>
            <person name="Dougherty B.A."/>
            <person name="Tomb J.-F."/>
            <person name="Adams M.D."/>
            <person name="Reich C.I."/>
            <person name="Overbeek R."/>
            <person name="Kirkness E.F."/>
            <person name="Weinstock K.G."/>
            <person name="Merrick J.M."/>
            <person name="Glodek A."/>
            <person name="Scott J.L."/>
            <person name="Geoghagen N.S.M."/>
            <person name="Weidman J.F."/>
            <person name="Fuhrmann J.L."/>
            <person name="Nguyen D."/>
            <person name="Utterback T.R."/>
            <person name="Kelley J.M."/>
            <person name="Peterson J.D."/>
            <person name="Sadow P.W."/>
            <person name="Hanna M.C."/>
            <person name="Cotton M.D."/>
            <person name="Roberts K.M."/>
            <person name="Hurst M.A."/>
            <person name="Kaine B.P."/>
            <person name="Borodovsky M."/>
            <person name="Klenk H.-P."/>
            <person name="Fraser C.M."/>
            <person name="Smith H.O."/>
            <person name="Woese C.R."/>
            <person name="Venter J.C."/>
        </authorList>
    </citation>
    <scope>NUCLEOTIDE SEQUENCE [LARGE SCALE GENOMIC DNA]</scope>
    <source>
        <strain>ATCC 43067 / DSM 2661 / JAL-1 / JCM 10045 / NBRC 100440</strain>
    </source>
</reference>
<reference key="2">
    <citation type="journal article" date="2003" name="Nucleic Acids Res.">
        <title>A nomenclature for restriction enzymes, DNA methyltransferases, homing endonucleases and their genes.</title>
        <authorList>
            <person name="Roberts R.J."/>
            <person name="Belfort M."/>
            <person name="Bestor T."/>
            <person name="Bhagwat A.S."/>
            <person name="Bickle T.A."/>
            <person name="Bitinaite J."/>
            <person name="Blumenthal R.M."/>
            <person name="Degtyarev S.K."/>
            <person name="Dryden D.T."/>
            <person name="Dybvig K."/>
            <person name="Firman K."/>
            <person name="Gromova E.S."/>
            <person name="Gumport R.I."/>
            <person name="Halford S.E."/>
            <person name="Hattman S."/>
            <person name="Heitman J."/>
            <person name="Hornby D.P."/>
            <person name="Janulaitis A."/>
            <person name="Jeltsch A."/>
            <person name="Josephsen J."/>
            <person name="Kiss A."/>
            <person name="Klaenhammer T.R."/>
            <person name="Kobayashi I."/>
            <person name="Kong H."/>
            <person name="Krueger D.H."/>
            <person name="Lacks S."/>
            <person name="Marinus M.G."/>
            <person name="Miyahara M."/>
            <person name="Morgan R.D."/>
            <person name="Murray N.E."/>
            <person name="Nagaraja V."/>
            <person name="Piekarowicz A."/>
            <person name="Pingoud A."/>
            <person name="Raleigh E."/>
            <person name="Rao D.N."/>
            <person name="Reich N."/>
            <person name="Repin V.E."/>
            <person name="Selker E.U."/>
            <person name="Shaw P.C."/>
            <person name="Stein D.C."/>
            <person name="Stoddard B.L."/>
            <person name="Szybalski W."/>
            <person name="Trautner T.A."/>
            <person name="Van Etten J.L."/>
            <person name="Vitor J.M."/>
            <person name="Wilson G.G."/>
            <person name="Xu S.Y."/>
        </authorList>
    </citation>
    <scope>NOMENCLATURE</scope>
</reference>
<dbReference type="EMBL" id="L77118">
    <property type="protein sequence ID" value="AAC37110.1"/>
    <property type="molecule type" value="Genomic_DNA"/>
</dbReference>
<dbReference type="PIR" id="H64514">
    <property type="entry name" value="H64514"/>
</dbReference>
<dbReference type="SMR" id="Q60296"/>
<dbReference type="REBASE" id="191890">
    <property type="entry name" value="S2.Apa1468ORF3072P"/>
</dbReference>
<dbReference type="REBASE" id="3909">
    <property type="entry name" value="S.MjaIX"/>
</dbReference>
<dbReference type="PaxDb" id="243232-MJ_ECL41"/>
<dbReference type="EnsemblBacteria" id="AAC37110">
    <property type="protein sequence ID" value="AAC37110"/>
    <property type="gene ID" value="MJ_ECL41"/>
</dbReference>
<dbReference type="KEGG" id="mja:MJ_ECL41"/>
<dbReference type="eggNOG" id="arCOG02628">
    <property type="taxonomic scope" value="Archaea"/>
</dbReference>
<dbReference type="HOGENOM" id="CLU_021095_2_3_2"/>
<dbReference type="InParanoid" id="Q60296"/>
<dbReference type="OrthoDB" id="84651at2157"/>
<dbReference type="PhylomeDB" id="Q60296"/>
<dbReference type="PRO" id="PR:Q60296"/>
<dbReference type="Proteomes" id="UP000000805">
    <property type="component" value="Plasmid pDSM2661_1"/>
</dbReference>
<dbReference type="GO" id="GO:0003677">
    <property type="term" value="F:DNA binding"/>
    <property type="evidence" value="ECO:0007669"/>
    <property type="project" value="UniProtKB-KW"/>
</dbReference>
<dbReference type="GO" id="GO:0009307">
    <property type="term" value="P:DNA restriction-modification system"/>
    <property type="evidence" value="ECO:0007669"/>
    <property type="project" value="UniProtKB-KW"/>
</dbReference>
<dbReference type="CDD" id="cd17273">
    <property type="entry name" value="RMtype1_S_EcoJA69PI-TRD1-CR1_like"/>
    <property type="match status" value="1"/>
</dbReference>
<dbReference type="Gene3D" id="3.90.220.20">
    <property type="entry name" value="DNA methylase specificity domains"/>
    <property type="match status" value="2"/>
</dbReference>
<dbReference type="InterPro" id="IPR000055">
    <property type="entry name" value="Restrct_endonuc_typeI_TRD"/>
</dbReference>
<dbReference type="InterPro" id="IPR044946">
    <property type="entry name" value="Restrct_endonuc_typeI_TRD_sf"/>
</dbReference>
<dbReference type="InterPro" id="IPR052021">
    <property type="entry name" value="Type-I_RS_S_subunit"/>
</dbReference>
<dbReference type="PANTHER" id="PTHR30408:SF12">
    <property type="entry name" value="TYPE I RESTRICTION ENZYME MJAVIII SPECIFICITY SUBUNIT"/>
    <property type="match status" value="1"/>
</dbReference>
<dbReference type="PANTHER" id="PTHR30408">
    <property type="entry name" value="TYPE-1 RESTRICTION ENZYME ECOKI SPECIFICITY PROTEIN"/>
    <property type="match status" value="1"/>
</dbReference>
<dbReference type="Pfam" id="PF01420">
    <property type="entry name" value="Methylase_S"/>
    <property type="match status" value="2"/>
</dbReference>
<dbReference type="SUPFAM" id="SSF116734">
    <property type="entry name" value="DNA methylase specificity domain"/>
    <property type="match status" value="2"/>
</dbReference>
<accession>Q60296</accession>
<evidence type="ECO:0000250" key="1">
    <source>
        <dbReference type="UniProtKB" id="P05719"/>
    </source>
</evidence>
<evidence type="ECO:0000303" key="2">
    <source>
    </source>
</evidence>
<evidence type="ECO:0000305" key="3"/>
<comment type="function">
    <text evidence="1 2">The specificity (S) subunit of a type I restriction enzyme; this subunit dictates DNA sequence specificity. The M and S subunits together form a methyltransferase (MTase) that methylates A-3 on the top and A-2 on the bottom strand of the sequence 5'-CCAN(5)GTR-3'. In the presence of the R subunit the complex can also act as an endonuclease, binding to the same target sequence but cutting the DNA some distance from this site. Whether the DNA is cut or modified depends on the methylation state of the target sequence. When the target site is unmodified, the DNA is cut. When the target site is hemimethylated, the complex acts as a maintenance MTase modifying the DNA so that both strands become methylated. After locating a non-methylated recognition site, the enzyme complex serves as a molecular motor that translocates DNA in an ATP-dependent manner until a collision occurs that triggers cleavage.</text>
</comment>
<comment type="subunit">
    <text evidence="1">The type I restriction/modification system is composed of three polypeptides R, M and S.</text>
</comment>
<comment type="domain">
    <text evidence="1">Contains two DNA recognition domains, each specifying recognition of one of the two defined components of the target sequence.</text>
</comment>
<comment type="miscellaneous">
    <text evidence="1">Type I restriction and modification enzymes are complex, multifunctional systems which require ATP, S-adenosyl methionine and Mg(2+) as cofactors and, in addition to their endonucleolytic and methylase activities, are potent DNA-dependent ATPases.</text>
</comment>
<comment type="similarity">
    <text evidence="3">Belongs to the type-I restriction system S methylase family.</text>
</comment>
<gene>
    <name type="primary">hsdS</name>
    <name type="ordered locus">MJECL41</name>
</gene>
<organism>
    <name type="scientific">Methanocaldococcus jannaschii (strain ATCC 43067 / DSM 2661 / JAL-1 / JCM 10045 / NBRC 100440)</name>
    <name type="common">Methanococcus jannaschii</name>
    <dbReference type="NCBI Taxonomy" id="243232"/>
    <lineage>
        <taxon>Archaea</taxon>
        <taxon>Methanobacteriati</taxon>
        <taxon>Methanobacteriota</taxon>
        <taxon>Methanomada group</taxon>
        <taxon>Methanococci</taxon>
        <taxon>Methanococcales</taxon>
        <taxon>Methanocaldococcaceae</taxon>
        <taxon>Methanocaldococcus</taxon>
    </lineage>
</organism>
<feature type="chain" id="PRO_0000198053" description="Type I restriction enzyme MjaIX specificity subunit">
    <location>
        <begin position="1"/>
        <end position="432"/>
    </location>
</feature>
<proteinExistence type="inferred from homology"/>